<protein>
    <recommendedName>
        <fullName evidence="1">Queuine tRNA-ribosyltransferase</fullName>
        <ecNumber evidence="1">2.4.2.29</ecNumber>
    </recommendedName>
    <alternativeName>
        <fullName evidence="1">Guanine insertion enzyme</fullName>
    </alternativeName>
    <alternativeName>
        <fullName evidence="1">tRNA-guanine transglycosylase</fullName>
    </alternativeName>
</protein>
<reference key="1">
    <citation type="journal article" date="2007" name="Nat. Biotechnol.">
        <title>Complete genome sequence of the myxobacterium Sorangium cellulosum.</title>
        <authorList>
            <person name="Schneiker S."/>
            <person name="Perlova O."/>
            <person name="Kaiser O."/>
            <person name="Gerth K."/>
            <person name="Alici A."/>
            <person name="Altmeyer M.O."/>
            <person name="Bartels D."/>
            <person name="Bekel T."/>
            <person name="Beyer S."/>
            <person name="Bode E."/>
            <person name="Bode H.B."/>
            <person name="Bolten C.J."/>
            <person name="Choudhuri J.V."/>
            <person name="Doss S."/>
            <person name="Elnakady Y.A."/>
            <person name="Frank B."/>
            <person name="Gaigalat L."/>
            <person name="Goesmann A."/>
            <person name="Groeger C."/>
            <person name="Gross F."/>
            <person name="Jelsbak L."/>
            <person name="Jelsbak L."/>
            <person name="Kalinowski J."/>
            <person name="Kegler C."/>
            <person name="Knauber T."/>
            <person name="Konietzny S."/>
            <person name="Kopp M."/>
            <person name="Krause L."/>
            <person name="Krug D."/>
            <person name="Linke B."/>
            <person name="Mahmud T."/>
            <person name="Martinez-Arias R."/>
            <person name="McHardy A.C."/>
            <person name="Merai M."/>
            <person name="Meyer F."/>
            <person name="Mormann S."/>
            <person name="Munoz-Dorado J."/>
            <person name="Perez J."/>
            <person name="Pradella S."/>
            <person name="Rachid S."/>
            <person name="Raddatz G."/>
            <person name="Rosenau F."/>
            <person name="Rueckert C."/>
            <person name="Sasse F."/>
            <person name="Scharfe M."/>
            <person name="Schuster S.C."/>
            <person name="Suen G."/>
            <person name="Treuner-Lange A."/>
            <person name="Velicer G.J."/>
            <person name="Vorholter F.-J."/>
            <person name="Weissman K.J."/>
            <person name="Welch R.D."/>
            <person name="Wenzel S.C."/>
            <person name="Whitworth D.E."/>
            <person name="Wilhelm S."/>
            <person name="Wittmann C."/>
            <person name="Bloecker H."/>
            <person name="Puehler A."/>
            <person name="Mueller R."/>
        </authorList>
    </citation>
    <scope>NUCLEOTIDE SEQUENCE [LARGE SCALE GENOMIC DNA]</scope>
    <source>
        <strain>So ce56</strain>
    </source>
</reference>
<dbReference type="EC" id="2.4.2.29" evidence="1"/>
<dbReference type="EMBL" id="AM746676">
    <property type="protein sequence ID" value="CAN91810.1"/>
    <property type="molecule type" value="Genomic_DNA"/>
</dbReference>
<dbReference type="RefSeq" id="WP_012234287.1">
    <property type="nucleotide sequence ID" value="NC_010162.1"/>
</dbReference>
<dbReference type="SMR" id="A9FI06"/>
<dbReference type="STRING" id="448385.sce1652"/>
<dbReference type="KEGG" id="scl:sce1652"/>
<dbReference type="eggNOG" id="COG0343">
    <property type="taxonomic scope" value="Bacteria"/>
</dbReference>
<dbReference type="HOGENOM" id="CLU_022060_0_1_7"/>
<dbReference type="OrthoDB" id="9805417at2"/>
<dbReference type="BioCyc" id="SCEL448385:SCE_RS08505-MONOMER"/>
<dbReference type="UniPathway" id="UPA00392"/>
<dbReference type="Proteomes" id="UP000002139">
    <property type="component" value="Chromosome"/>
</dbReference>
<dbReference type="GO" id="GO:0005829">
    <property type="term" value="C:cytosol"/>
    <property type="evidence" value="ECO:0007669"/>
    <property type="project" value="TreeGrafter"/>
</dbReference>
<dbReference type="GO" id="GO:0046872">
    <property type="term" value="F:metal ion binding"/>
    <property type="evidence" value="ECO:0007669"/>
    <property type="project" value="UniProtKB-KW"/>
</dbReference>
<dbReference type="GO" id="GO:0008479">
    <property type="term" value="F:tRNA-guanosine(34) queuine transglycosylase activity"/>
    <property type="evidence" value="ECO:0007669"/>
    <property type="project" value="UniProtKB-UniRule"/>
</dbReference>
<dbReference type="GO" id="GO:0008616">
    <property type="term" value="P:queuosine biosynthetic process"/>
    <property type="evidence" value="ECO:0007669"/>
    <property type="project" value="UniProtKB-UniRule"/>
</dbReference>
<dbReference type="GO" id="GO:0002099">
    <property type="term" value="P:tRNA wobble guanine modification"/>
    <property type="evidence" value="ECO:0007669"/>
    <property type="project" value="TreeGrafter"/>
</dbReference>
<dbReference type="GO" id="GO:0101030">
    <property type="term" value="P:tRNA-guanine transglycosylation"/>
    <property type="evidence" value="ECO:0007669"/>
    <property type="project" value="InterPro"/>
</dbReference>
<dbReference type="Gene3D" id="3.20.20.105">
    <property type="entry name" value="Queuine tRNA-ribosyltransferase-like"/>
    <property type="match status" value="1"/>
</dbReference>
<dbReference type="HAMAP" id="MF_00168">
    <property type="entry name" value="Q_tRNA_Tgt"/>
    <property type="match status" value="1"/>
</dbReference>
<dbReference type="InterPro" id="IPR050076">
    <property type="entry name" value="ArchSynthase1/Queuine_TRR"/>
</dbReference>
<dbReference type="InterPro" id="IPR004803">
    <property type="entry name" value="TGT"/>
</dbReference>
<dbReference type="InterPro" id="IPR036511">
    <property type="entry name" value="TGT-like_sf"/>
</dbReference>
<dbReference type="InterPro" id="IPR002616">
    <property type="entry name" value="tRNA_ribo_trans-like"/>
</dbReference>
<dbReference type="NCBIfam" id="TIGR00430">
    <property type="entry name" value="Q_tRNA_tgt"/>
    <property type="match status" value="1"/>
</dbReference>
<dbReference type="NCBIfam" id="TIGR00449">
    <property type="entry name" value="tgt_general"/>
    <property type="match status" value="1"/>
</dbReference>
<dbReference type="PANTHER" id="PTHR46499">
    <property type="entry name" value="QUEUINE TRNA-RIBOSYLTRANSFERASE"/>
    <property type="match status" value="1"/>
</dbReference>
<dbReference type="PANTHER" id="PTHR46499:SF1">
    <property type="entry name" value="QUEUINE TRNA-RIBOSYLTRANSFERASE"/>
    <property type="match status" value="1"/>
</dbReference>
<dbReference type="Pfam" id="PF01702">
    <property type="entry name" value="TGT"/>
    <property type="match status" value="1"/>
</dbReference>
<dbReference type="SUPFAM" id="SSF51713">
    <property type="entry name" value="tRNA-guanine transglycosylase"/>
    <property type="match status" value="1"/>
</dbReference>
<name>TGT_SORC5</name>
<organism>
    <name type="scientific">Sorangium cellulosum (strain So ce56)</name>
    <name type="common">Polyangium cellulosum (strain So ce56)</name>
    <dbReference type="NCBI Taxonomy" id="448385"/>
    <lineage>
        <taxon>Bacteria</taxon>
        <taxon>Pseudomonadati</taxon>
        <taxon>Myxococcota</taxon>
        <taxon>Polyangia</taxon>
        <taxon>Polyangiales</taxon>
        <taxon>Polyangiaceae</taxon>
        <taxon>Sorangium</taxon>
    </lineage>
</organism>
<sequence length="394" mass="42171">MSRTPGFSFSELARDGHARTGVLSTPHGDVLTPTFMPVGTQGSVKTLTPAEVAATGARIVLGNTYHLWLRPGPELVAQLGGLHAFTRWPHAMLTDSGGFQAFSLAERRTLVEDGFVFRSHLDGARKALTPEVAMEVQGLLGADIAMQLDVCPPGGAPRPEVEEACRLTTRWGKRCLAAKRPSQALFGIVQGGTSVALRMAHADELGALPFDGLALGGFSVGEPIAMMHEVVAQIGPHLDPTRPRYLMGVGTPIDLVHAIGAGVDMFDCVLPTRNARNGQALTQHGKIVIKQARYKEDRSPLDPTCACPTCTGGYSRAYLRHLYMAGEILVLRLLTEHNLHLYGRLMREARAAIAEGRYAAFARAWLGASDAGNANDANETVGATESTESTESTE</sequence>
<accession>A9FI06</accession>
<comment type="function">
    <text evidence="1">Catalyzes the base-exchange of a guanine (G) residue with the queuine precursor 7-aminomethyl-7-deazaguanine (PreQ1) at position 34 (anticodon wobble position) in tRNAs with GU(N) anticodons (tRNA-Asp, -Asn, -His and -Tyr). Catalysis occurs through a double-displacement mechanism. The nucleophile active site attacks the C1' of nucleotide 34 to detach the guanine base from the RNA, forming a covalent enzyme-RNA intermediate. The proton acceptor active site deprotonates the incoming PreQ1, allowing a nucleophilic attack on the C1' of the ribose to form the product. After dissociation, two additional enzymatic reactions on the tRNA convert PreQ1 to queuine (Q), resulting in the hypermodified nucleoside queuosine (7-(((4,5-cis-dihydroxy-2-cyclopenten-1-yl)amino)methyl)-7-deazaguanosine).</text>
</comment>
<comment type="catalytic activity">
    <reaction evidence="1">
        <text>7-aminomethyl-7-carbaguanine + guanosine(34) in tRNA = 7-aminomethyl-7-carbaguanosine(34) in tRNA + guanine</text>
        <dbReference type="Rhea" id="RHEA:24104"/>
        <dbReference type="Rhea" id="RHEA-COMP:10341"/>
        <dbReference type="Rhea" id="RHEA-COMP:10342"/>
        <dbReference type="ChEBI" id="CHEBI:16235"/>
        <dbReference type="ChEBI" id="CHEBI:58703"/>
        <dbReference type="ChEBI" id="CHEBI:74269"/>
        <dbReference type="ChEBI" id="CHEBI:82833"/>
        <dbReference type="EC" id="2.4.2.29"/>
    </reaction>
</comment>
<comment type="cofactor">
    <cofactor evidence="1">
        <name>Zn(2+)</name>
        <dbReference type="ChEBI" id="CHEBI:29105"/>
    </cofactor>
    <text evidence="1">Binds 1 zinc ion per subunit.</text>
</comment>
<comment type="pathway">
    <text evidence="1">tRNA modification; tRNA-queuosine biosynthesis.</text>
</comment>
<comment type="subunit">
    <text evidence="1">Homodimer. Within each dimer, one monomer is responsible for RNA recognition and catalysis, while the other monomer binds to the replacement base PreQ1.</text>
</comment>
<comment type="similarity">
    <text evidence="1">Belongs to the queuine tRNA-ribosyltransferase family.</text>
</comment>
<gene>
    <name evidence="1" type="primary">tgt</name>
    <name type="ordered locus">sce1652</name>
</gene>
<evidence type="ECO:0000255" key="1">
    <source>
        <dbReference type="HAMAP-Rule" id="MF_00168"/>
    </source>
</evidence>
<evidence type="ECO:0000256" key="2">
    <source>
        <dbReference type="SAM" id="MobiDB-lite"/>
    </source>
</evidence>
<feature type="chain" id="PRO_1000198023" description="Queuine tRNA-ribosyltransferase">
    <location>
        <begin position="1"/>
        <end position="394"/>
    </location>
</feature>
<feature type="region of interest" description="RNA binding" evidence="1">
    <location>
        <begin position="248"/>
        <end position="254"/>
    </location>
</feature>
<feature type="region of interest" description="RNA binding; important for wobble base 34 recognition" evidence="1">
    <location>
        <begin position="272"/>
        <end position="276"/>
    </location>
</feature>
<feature type="region of interest" description="Disordered" evidence="2">
    <location>
        <begin position="375"/>
        <end position="394"/>
    </location>
</feature>
<feature type="active site" description="Proton acceptor" evidence="1">
    <location>
        <position position="95"/>
    </location>
</feature>
<feature type="active site" description="Nucleophile" evidence="1">
    <location>
        <position position="267"/>
    </location>
</feature>
<feature type="binding site" evidence="1">
    <location>
        <begin position="95"/>
        <end position="99"/>
    </location>
    <ligand>
        <name>substrate</name>
    </ligand>
</feature>
<feature type="binding site" evidence="1">
    <location>
        <position position="149"/>
    </location>
    <ligand>
        <name>substrate</name>
    </ligand>
</feature>
<feature type="binding site" evidence="1">
    <location>
        <position position="190"/>
    </location>
    <ligand>
        <name>substrate</name>
    </ligand>
</feature>
<feature type="binding site" evidence="1">
    <location>
        <position position="217"/>
    </location>
    <ligand>
        <name>substrate</name>
    </ligand>
</feature>
<feature type="binding site" evidence="1">
    <location>
        <position position="305"/>
    </location>
    <ligand>
        <name>Zn(2+)</name>
        <dbReference type="ChEBI" id="CHEBI:29105"/>
    </ligand>
</feature>
<feature type="binding site" evidence="1">
    <location>
        <position position="307"/>
    </location>
    <ligand>
        <name>Zn(2+)</name>
        <dbReference type="ChEBI" id="CHEBI:29105"/>
    </ligand>
</feature>
<feature type="binding site" evidence="1">
    <location>
        <position position="310"/>
    </location>
    <ligand>
        <name>Zn(2+)</name>
        <dbReference type="ChEBI" id="CHEBI:29105"/>
    </ligand>
</feature>
<feature type="binding site" evidence="1">
    <location>
        <position position="337"/>
    </location>
    <ligand>
        <name>Zn(2+)</name>
        <dbReference type="ChEBI" id="CHEBI:29105"/>
    </ligand>
</feature>
<keyword id="KW-0328">Glycosyltransferase</keyword>
<keyword id="KW-0479">Metal-binding</keyword>
<keyword id="KW-0671">Queuosine biosynthesis</keyword>
<keyword id="KW-1185">Reference proteome</keyword>
<keyword id="KW-0808">Transferase</keyword>
<keyword id="KW-0819">tRNA processing</keyword>
<keyword id="KW-0862">Zinc</keyword>
<proteinExistence type="inferred from homology"/>